<comment type="subunit">
    <text evidence="2">Component of the mitochondrial ribosome small subunit.</text>
</comment>
<comment type="subcellular location">
    <subcellularLocation>
        <location evidence="1">Mitochondrion</location>
    </subcellularLocation>
</comment>
<comment type="similarity">
    <text evidence="2">Belongs to the universal ribosomal protein uS8 family.</text>
</comment>
<gene>
    <name type="primary">RPS15AE</name>
    <name type="ordered locus">At4g29430</name>
    <name type="ORF">F17A13.250</name>
</gene>
<sequence>MGRRILNDALRTIVNAERRGKASVELKPISTVMSSFLRIMKEKGYIKNFQVYDPHRVGRITVDLQGRVNDCKALTYRQDVRAKEIEKYTERTLPTRQWGYVVITTPDGILDHEEAIKRNVGGQVLGFFY</sequence>
<proteinExistence type="evidence at protein level"/>
<keyword id="KW-0002">3D-structure</keyword>
<keyword id="KW-0496">Mitochondrion</keyword>
<keyword id="KW-1185">Reference proteome</keyword>
<keyword id="KW-0687">Ribonucleoprotein</keyword>
<keyword id="KW-0689">Ribosomal protein</keyword>
<accession>Q9M0E0</accession>
<reference key="1">
    <citation type="journal article" date="1999" name="Nature">
        <title>Sequence and analysis of chromosome 4 of the plant Arabidopsis thaliana.</title>
        <authorList>
            <person name="Mayer K.F.X."/>
            <person name="Schueller C."/>
            <person name="Wambutt R."/>
            <person name="Murphy G."/>
            <person name="Volckaert G."/>
            <person name="Pohl T."/>
            <person name="Duesterhoeft A."/>
            <person name="Stiekema W."/>
            <person name="Entian K.-D."/>
            <person name="Terryn N."/>
            <person name="Harris B."/>
            <person name="Ansorge W."/>
            <person name="Brandt P."/>
            <person name="Grivell L.A."/>
            <person name="Rieger M."/>
            <person name="Weichselgartner M."/>
            <person name="de Simone V."/>
            <person name="Obermaier B."/>
            <person name="Mache R."/>
            <person name="Mueller M."/>
            <person name="Kreis M."/>
            <person name="Delseny M."/>
            <person name="Puigdomenech P."/>
            <person name="Watson M."/>
            <person name="Schmidtheini T."/>
            <person name="Reichert B."/>
            <person name="Portetelle D."/>
            <person name="Perez-Alonso M."/>
            <person name="Boutry M."/>
            <person name="Bancroft I."/>
            <person name="Vos P."/>
            <person name="Hoheisel J."/>
            <person name="Zimmermann W."/>
            <person name="Wedler H."/>
            <person name="Ridley P."/>
            <person name="Langham S.-A."/>
            <person name="McCullagh B."/>
            <person name="Bilham L."/>
            <person name="Robben J."/>
            <person name="van der Schueren J."/>
            <person name="Grymonprez B."/>
            <person name="Chuang Y.-J."/>
            <person name="Vandenbussche F."/>
            <person name="Braeken M."/>
            <person name="Weltjens I."/>
            <person name="Voet M."/>
            <person name="Bastiaens I."/>
            <person name="Aert R."/>
            <person name="Defoor E."/>
            <person name="Weitzenegger T."/>
            <person name="Bothe G."/>
            <person name="Ramsperger U."/>
            <person name="Hilbert H."/>
            <person name="Braun M."/>
            <person name="Holzer E."/>
            <person name="Brandt A."/>
            <person name="Peters S."/>
            <person name="van Staveren M."/>
            <person name="Dirkse W."/>
            <person name="Mooijman P."/>
            <person name="Klein Lankhorst R."/>
            <person name="Rose M."/>
            <person name="Hauf J."/>
            <person name="Koetter P."/>
            <person name="Berneiser S."/>
            <person name="Hempel S."/>
            <person name="Feldpausch M."/>
            <person name="Lamberth S."/>
            <person name="Van den Daele H."/>
            <person name="De Keyser A."/>
            <person name="Buysshaert C."/>
            <person name="Gielen J."/>
            <person name="Villarroel R."/>
            <person name="De Clercq R."/>
            <person name="van Montagu M."/>
            <person name="Rogers J."/>
            <person name="Cronin A."/>
            <person name="Quail M.A."/>
            <person name="Bray-Allen S."/>
            <person name="Clark L."/>
            <person name="Doggett J."/>
            <person name="Hall S."/>
            <person name="Kay M."/>
            <person name="Lennard N."/>
            <person name="McLay K."/>
            <person name="Mayes R."/>
            <person name="Pettett A."/>
            <person name="Rajandream M.A."/>
            <person name="Lyne M."/>
            <person name="Benes V."/>
            <person name="Rechmann S."/>
            <person name="Borkova D."/>
            <person name="Bloecker H."/>
            <person name="Scharfe M."/>
            <person name="Grimm M."/>
            <person name="Loehnert T.-H."/>
            <person name="Dose S."/>
            <person name="de Haan M."/>
            <person name="Maarse A.C."/>
            <person name="Schaefer M."/>
            <person name="Mueller-Auer S."/>
            <person name="Gabel C."/>
            <person name="Fuchs M."/>
            <person name="Fartmann B."/>
            <person name="Granderath K."/>
            <person name="Dauner D."/>
            <person name="Herzl A."/>
            <person name="Neumann S."/>
            <person name="Argiriou A."/>
            <person name="Vitale D."/>
            <person name="Liguori R."/>
            <person name="Piravandi E."/>
            <person name="Massenet O."/>
            <person name="Quigley F."/>
            <person name="Clabauld G."/>
            <person name="Muendlein A."/>
            <person name="Felber R."/>
            <person name="Schnabl S."/>
            <person name="Hiller R."/>
            <person name="Schmidt W."/>
            <person name="Lecharny A."/>
            <person name="Aubourg S."/>
            <person name="Chefdor F."/>
            <person name="Cooke R."/>
            <person name="Berger C."/>
            <person name="Monfort A."/>
            <person name="Casacuberta E."/>
            <person name="Gibbons T."/>
            <person name="Weber N."/>
            <person name="Vandenbol M."/>
            <person name="Bargues M."/>
            <person name="Terol J."/>
            <person name="Torres A."/>
            <person name="Perez-Perez A."/>
            <person name="Purnelle B."/>
            <person name="Bent E."/>
            <person name="Johnson S."/>
            <person name="Tacon D."/>
            <person name="Jesse T."/>
            <person name="Heijnen L."/>
            <person name="Schwarz S."/>
            <person name="Scholler P."/>
            <person name="Heber S."/>
            <person name="Francs P."/>
            <person name="Bielke C."/>
            <person name="Frishman D."/>
            <person name="Haase D."/>
            <person name="Lemcke K."/>
            <person name="Mewes H.-W."/>
            <person name="Stocker S."/>
            <person name="Zaccaria P."/>
            <person name="Bevan M."/>
            <person name="Wilson R.K."/>
            <person name="de la Bastide M."/>
            <person name="Habermann K."/>
            <person name="Parnell L."/>
            <person name="Dedhia N."/>
            <person name="Gnoj L."/>
            <person name="Schutz K."/>
            <person name="Huang E."/>
            <person name="Spiegel L."/>
            <person name="Sekhon M."/>
            <person name="Murray J."/>
            <person name="Sheet P."/>
            <person name="Cordes M."/>
            <person name="Abu-Threideh J."/>
            <person name="Stoneking T."/>
            <person name="Kalicki J."/>
            <person name="Graves T."/>
            <person name="Harmon G."/>
            <person name="Edwards J."/>
            <person name="Latreille P."/>
            <person name="Courtney L."/>
            <person name="Cloud J."/>
            <person name="Abbott A."/>
            <person name="Scott K."/>
            <person name="Johnson D."/>
            <person name="Minx P."/>
            <person name="Bentley D."/>
            <person name="Fulton B."/>
            <person name="Miller N."/>
            <person name="Greco T."/>
            <person name="Kemp K."/>
            <person name="Kramer J."/>
            <person name="Fulton L."/>
            <person name="Mardis E."/>
            <person name="Dante M."/>
            <person name="Pepin K."/>
            <person name="Hillier L.W."/>
            <person name="Nelson J."/>
            <person name="Spieth J."/>
            <person name="Ryan E."/>
            <person name="Andrews S."/>
            <person name="Geisel C."/>
            <person name="Layman D."/>
            <person name="Du H."/>
            <person name="Ali J."/>
            <person name="Berghoff A."/>
            <person name="Jones K."/>
            <person name="Drone K."/>
            <person name="Cotton M."/>
            <person name="Joshu C."/>
            <person name="Antonoiu B."/>
            <person name="Zidanic M."/>
            <person name="Strong C."/>
            <person name="Sun H."/>
            <person name="Lamar B."/>
            <person name="Yordan C."/>
            <person name="Ma P."/>
            <person name="Zhong J."/>
            <person name="Preston R."/>
            <person name="Vil D."/>
            <person name="Shekher M."/>
            <person name="Matero A."/>
            <person name="Shah R."/>
            <person name="Swaby I.K."/>
            <person name="O'Shaughnessy A."/>
            <person name="Rodriguez M."/>
            <person name="Hoffman J."/>
            <person name="Till S."/>
            <person name="Granat S."/>
            <person name="Shohdy N."/>
            <person name="Hasegawa A."/>
            <person name="Hameed A."/>
            <person name="Lodhi M."/>
            <person name="Johnson A."/>
            <person name="Chen E."/>
            <person name="Marra M.A."/>
            <person name="Martienssen R."/>
            <person name="McCombie W.R."/>
        </authorList>
    </citation>
    <scope>NUCLEOTIDE SEQUENCE [LARGE SCALE GENOMIC DNA]</scope>
    <source>
        <strain>cv. Columbia</strain>
    </source>
</reference>
<reference key="2">
    <citation type="journal article" date="2017" name="Plant J.">
        <title>Araport11: a complete reannotation of the Arabidopsis thaliana reference genome.</title>
        <authorList>
            <person name="Cheng C.Y."/>
            <person name="Krishnakumar V."/>
            <person name="Chan A.P."/>
            <person name="Thibaud-Nissen F."/>
            <person name="Schobel S."/>
            <person name="Town C.D."/>
        </authorList>
    </citation>
    <scope>GENOME REANNOTATION</scope>
    <source>
        <strain>cv. Columbia</strain>
    </source>
</reference>
<reference key="3">
    <citation type="submission" date="2006-07" db="EMBL/GenBank/DDBJ databases">
        <title>Large-scale analysis of RIKEN Arabidopsis full-length (RAFL) cDNAs.</title>
        <authorList>
            <person name="Totoki Y."/>
            <person name="Seki M."/>
            <person name="Ishida J."/>
            <person name="Nakajima M."/>
            <person name="Enju A."/>
            <person name="Kamiya A."/>
            <person name="Narusaka M."/>
            <person name="Shin-i T."/>
            <person name="Nakagawa M."/>
            <person name="Sakamoto N."/>
            <person name="Oishi K."/>
            <person name="Kohara Y."/>
            <person name="Kobayashi M."/>
            <person name="Toyoda A."/>
            <person name="Sakaki Y."/>
            <person name="Sakurai T."/>
            <person name="Iida K."/>
            <person name="Akiyama K."/>
            <person name="Satou M."/>
            <person name="Toyoda T."/>
            <person name="Konagaya A."/>
            <person name="Carninci P."/>
            <person name="Kawai J."/>
            <person name="Hayashizaki Y."/>
            <person name="Shinozaki K."/>
        </authorList>
    </citation>
    <scope>NUCLEOTIDE SEQUENCE [LARGE SCALE MRNA]</scope>
    <source>
        <strain>cv. Columbia</strain>
    </source>
</reference>
<reference key="4">
    <citation type="submission" date="2006-08" db="EMBL/GenBank/DDBJ databases">
        <title>Arabidopsis ORF clones.</title>
        <authorList>
            <person name="Quinitio C."/>
            <person name="Chen H."/>
            <person name="Kim C.J."/>
            <person name="Shinn P."/>
            <person name="Ecker J.R."/>
        </authorList>
    </citation>
    <scope>NUCLEOTIDE SEQUENCE [LARGE SCALE MRNA]</scope>
    <source>
        <strain>cv. Columbia</strain>
    </source>
</reference>
<reference key="5">
    <citation type="submission" date="2002-03" db="EMBL/GenBank/DDBJ databases">
        <title>Full-length cDNA from Arabidopsis thaliana.</title>
        <authorList>
            <person name="Brover V.V."/>
            <person name="Troukhan M.E."/>
            <person name="Alexandrov N.A."/>
            <person name="Lu Y.-P."/>
            <person name="Flavell R.B."/>
            <person name="Feldmann K.A."/>
        </authorList>
    </citation>
    <scope>NUCLEOTIDE SEQUENCE [LARGE SCALE MRNA]</scope>
</reference>
<reference key="6">
    <citation type="journal article" date="2001" name="Plant Physiol.">
        <title>The organization of cytoplasmic ribosomal protein genes in the Arabidopsis genome.</title>
        <authorList>
            <person name="Barakat A."/>
            <person name="Szick-Miranda K."/>
            <person name="Chang I.-F."/>
            <person name="Guyot R."/>
            <person name="Blanc G."/>
            <person name="Cooke R."/>
            <person name="Delseny M."/>
            <person name="Bailey-Serres J."/>
        </authorList>
    </citation>
    <scope>GENE FAMILY ORGANIZATION</scope>
    <scope>NOMENCLATURE</scope>
</reference>
<reference key="7">
    <citation type="journal article" date="2023" name="Plant Cell">
        <title>An updated nomenclature for plant ribosomal protein genes.</title>
        <authorList>
            <person name="Scarpin M.R."/>
            <person name="Busche M."/>
            <person name="Martinez R.E."/>
            <person name="Harper L.C."/>
            <person name="Reiser L."/>
            <person name="Szakonyi D."/>
            <person name="Merchante C."/>
            <person name="Lan T."/>
            <person name="Xiong W."/>
            <person name="Mo B."/>
            <person name="Tang G."/>
            <person name="Chen X."/>
            <person name="Bailey-Serres J."/>
            <person name="Browning K.S."/>
            <person name="Brunkard J.O."/>
        </authorList>
    </citation>
    <scope>NOMENCLATURE</scope>
</reference>
<feature type="chain" id="PRO_0000250170" description="Small ribosomal subunit protein uS8my">
    <location>
        <begin position="1"/>
        <end position="129"/>
    </location>
</feature>
<protein>
    <recommendedName>
        <fullName evidence="1">Small ribosomal subunit protein uS8my</fullName>
    </recommendedName>
    <alternativeName>
        <fullName>40S ribosomal protein S15a-5</fullName>
    </alternativeName>
</protein>
<organism>
    <name type="scientific">Arabidopsis thaliana</name>
    <name type="common">Mouse-ear cress</name>
    <dbReference type="NCBI Taxonomy" id="3702"/>
    <lineage>
        <taxon>Eukaryota</taxon>
        <taxon>Viridiplantae</taxon>
        <taxon>Streptophyta</taxon>
        <taxon>Embryophyta</taxon>
        <taxon>Tracheophyta</taxon>
        <taxon>Spermatophyta</taxon>
        <taxon>Magnoliopsida</taxon>
        <taxon>eudicotyledons</taxon>
        <taxon>Gunneridae</taxon>
        <taxon>Pentapetalae</taxon>
        <taxon>rosids</taxon>
        <taxon>malvids</taxon>
        <taxon>Brassicales</taxon>
        <taxon>Brassicaceae</taxon>
        <taxon>Camelineae</taxon>
        <taxon>Arabidopsis</taxon>
    </lineage>
</organism>
<evidence type="ECO:0000303" key="1">
    <source>
    </source>
</evidence>
<evidence type="ECO:0000305" key="2"/>
<name>R15A5_ARATH</name>
<dbReference type="EMBL" id="AL096692">
    <property type="status" value="NOT_ANNOTATED_CDS"/>
    <property type="molecule type" value="Genomic_DNA"/>
</dbReference>
<dbReference type="EMBL" id="AL161575">
    <property type="protein sequence ID" value="CAB79701.1"/>
    <property type="molecule type" value="Genomic_DNA"/>
</dbReference>
<dbReference type="EMBL" id="CP002687">
    <property type="protein sequence ID" value="AEE85630.1"/>
    <property type="molecule type" value="Genomic_DNA"/>
</dbReference>
<dbReference type="EMBL" id="AK228983">
    <property type="protein sequence ID" value="BAF00871.1"/>
    <property type="molecule type" value="mRNA"/>
</dbReference>
<dbReference type="EMBL" id="BT026503">
    <property type="protein sequence ID" value="ABH04610.1"/>
    <property type="molecule type" value="mRNA"/>
</dbReference>
<dbReference type="EMBL" id="AY085780">
    <property type="protein sequence ID" value="AAM62997.1"/>
    <property type="molecule type" value="mRNA"/>
</dbReference>
<dbReference type="PIR" id="D85343">
    <property type="entry name" value="D85343"/>
</dbReference>
<dbReference type="RefSeq" id="NP_194672.1">
    <property type="nucleotide sequence ID" value="NM_119088.4"/>
</dbReference>
<dbReference type="PDB" id="6XYW">
    <property type="method" value="EM"/>
    <property type="resolution" value="3.86 A"/>
    <property type="chains" value="Bg=1-129"/>
</dbReference>
<dbReference type="PDBsum" id="6XYW"/>
<dbReference type="EMDB" id="EMD-10654"/>
<dbReference type="SMR" id="Q9M0E0"/>
<dbReference type="BioGRID" id="14351">
    <property type="interactions" value="1"/>
</dbReference>
<dbReference type="FunCoup" id="Q9M0E0">
    <property type="interactions" value="278"/>
</dbReference>
<dbReference type="IntAct" id="Q9M0E0">
    <property type="interactions" value="1"/>
</dbReference>
<dbReference type="STRING" id="3702.Q9M0E0"/>
<dbReference type="PaxDb" id="3702-AT4G29430.1"/>
<dbReference type="ProteomicsDB" id="236494"/>
<dbReference type="EnsemblPlants" id="AT4G29430.1">
    <property type="protein sequence ID" value="AT4G29430.1"/>
    <property type="gene ID" value="AT4G29430"/>
</dbReference>
<dbReference type="GeneID" id="829064"/>
<dbReference type="Gramene" id="AT4G29430.1">
    <property type="protein sequence ID" value="AT4G29430.1"/>
    <property type="gene ID" value="AT4G29430"/>
</dbReference>
<dbReference type="KEGG" id="ath:AT4G29430"/>
<dbReference type="Araport" id="AT4G29430"/>
<dbReference type="TAIR" id="AT4G29430">
    <property type="gene designation" value="RPS15AE"/>
</dbReference>
<dbReference type="eggNOG" id="KOG1754">
    <property type="taxonomic scope" value="Eukaryota"/>
</dbReference>
<dbReference type="HOGENOM" id="CLU_098428_1_1_1"/>
<dbReference type="InParanoid" id="Q9M0E0"/>
<dbReference type="OMA" id="HRVGKIS"/>
<dbReference type="OrthoDB" id="10250260at2759"/>
<dbReference type="PhylomeDB" id="Q9M0E0"/>
<dbReference type="PRO" id="PR:Q9M0E0"/>
<dbReference type="Proteomes" id="UP000006548">
    <property type="component" value="Chromosome 4"/>
</dbReference>
<dbReference type="ExpressionAtlas" id="Q9M0E0">
    <property type="expression patterns" value="baseline and differential"/>
</dbReference>
<dbReference type="GO" id="GO:0022626">
    <property type="term" value="C:cytosolic ribosome"/>
    <property type="evidence" value="ECO:0007005"/>
    <property type="project" value="TAIR"/>
</dbReference>
<dbReference type="GO" id="GO:0022627">
    <property type="term" value="C:cytosolic small ribosomal subunit"/>
    <property type="evidence" value="ECO:0007005"/>
    <property type="project" value="TAIR"/>
</dbReference>
<dbReference type="GO" id="GO:0005739">
    <property type="term" value="C:mitochondrion"/>
    <property type="evidence" value="ECO:0000314"/>
    <property type="project" value="TAIR"/>
</dbReference>
<dbReference type="GO" id="GO:0000325">
    <property type="term" value="C:plant-type vacuole"/>
    <property type="evidence" value="ECO:0007005"/>
    <property type="project" value="TAIR"/>
</dbReference>
<dbReference type="GO" id="GO:0003735">
    <property type="term" value="F:structural constituent of ribosome"/>
    <property type="evidence" value="ECO:0000314"/>
    <property type="project" value="CAFA"/>
</dbReference>
<dbReference type="GO" id="GO:0006412">
    <property type="term" value="P:translation"/>
    <property type="evidence" value="ECO:0007669"/>
    <property type="project" value="InterPro"/>
</dbReference>
<dbReference type="FunFam" id="3.30.1370.30:FF:000001">
    <property type="entry name" value="40S ribosomal protein S15a"/>
    <property type="match status" value="1"/>
</dbReference>
<dbReference type="FunFam" id="3.30.1490.10:FF:000003">
    <property type="entry name" value="40S ribosomal protein S15a-5"/>
    <property type="match status" value="1"/>
</dbReference>
<dbReference type="Gene3D" id="3.30.1370.30">
    <property type="match status" value="1"/>
</dbReference>
<dbReference type="Gene3D" id="3.30.1490.10">
    <property type="match status" value="1"/>
</dbReference>
<dbReference type="InterPro" id="IPR000630">
    <property type="entry name" value="Ribosomal_uS8"/>
</dbReference>
<dbReference type="InterPro" id="IPR047863">
    <property type="entry name" value="Ribosomal_uS8_CS"/>
</dbReference>
<dbReference type="InterPro" id="IPR035987">
    <property type="entry name" value="Ribosomal_uS8_sf"/>
</dbReference>
<dbReference type="NCBIfam" id="NF003115">
    <property type="entry name" value="PRK04034.1"/>
    <property type="match status" value="1"/>
</dbReference>
<dbReference type="PANTHER" id="PTHR11758">
    <property type="entry name" value="40S RIBOSOMAL PROTEIN S15A"/>
    <property type="match status" value="1"/>
</dbReference>
<dbReference type="Pfam" id="PF00410">
    <property type="entry name" value="Ribosomal_S8"/>
    <property type="match status" value="1"/>
</dbReference>
<dbReference type="SUPFAM" id="SSF56047">
    <property type="entry name" value="Ribosomal protein S8"/>
    <property type="match status" value="1"/>
</dbReference>
<dbReference type="PROSITE" id="PS00053">
    <property type="entry name" value="RIBOSOMAL_S8"/>
    <property type="match status" value="1"/>
</dbReference>